<dbReference type="EMBL" id="BC167402">
    <property type="protein sequence ID" value="AAI67402.1"/>
    <property type="molecule type" value="mRNA"/>
</dbReference>
<dbReference type="RefSeq" id="NP_001123409.1">
    <property type="nucleotide sequence ID" value="NM_001129937.1"/>
</dbReference>
<dbReference type="SMR" id="B3DLD3"/>
<dbReference type="FunCoup" id="B3DLD3">
    <property type="interactions" value="295"/>
</dbReference>
<dbReference type="STRING" id="8364.ENSXETP00000011514"/>
<dbReference type="GeneID" id="100170185"/>
<dbReference type="KEGG" id="xtr:100170185"/>
<dbReference type="AGR" id="Xenbase:XB-GENE-483233"/>
<dbReference type="CTD" id="54345"/>
<dbReference type="Xenbase" id="XB-GENE-483233">
    <property type="gene designation" value="sox18"/>
</dbReference>
<dbReference type="InParanoid" id="B3DLD3"/>
<dbReference type="OMA" id="MANLSHF"/>
<dbReference type="Proteomes" id="UP000008143">
    <property type="component" value="Chromosome 10"/>
</dbReference>
<dbReference type="GO" id="GO:0005634">
    <property type="term" value="C:nucleus"/>
    <property type="evidence" value="ECO:0000250"/>
    <property type="project" value="UniProtKB"/>
</dbReference>
<dbReference type="GO" id="GO:0043565">
    <property type="term" value="F:sequence-specific DNA binding"/>
    <property type="evidence" value="ECO:0000250"/>
    <property type="project" value="UniProtKB"/>
</dbReference>
<dbReference type="GO" id="GO:0007507">
    <property type="term" value="P:heart development"/>
    <property type="evidence" value="ECO:0000250"/>
    <property type="project" value="UniProtKB"/>
</dbReference>
<dbReference type="GO" id="GO:0030178">
    <property type="term" value="P:negative regulation of Wnt signaling pathway"/>
    <property type="evidence" value="ECO:0000250"/>
    <property type="project" value="UniProtKB"/>
</dbReference>
<dbReference type="CDD" id="cd22048">
    <property type="entry name" value="HMG-box_SoxF_SOX18"/>
    <property type="match status" value="1"/>
</dbReference>
<dbReference type="FunFam" id="1.10.30.10:FF:000008">
    <property type="entry name" value="transcription factor SOX-7"/>
    <property type="match status" value="1"/>
</dbReference>
<dbReference type="Gene3D" id="1.10.30.10">
    <property type="entry name" value="High mobility group box domain"/>
    <property type="match status" value="1"/>
</dbReference>
<dbReference type="InterPro" id="IPR009071">
    <property type="entry name" value="HMG_box_dom"/>
</dbReference>
<dbReference type="InterPro" id="IPR036910">
    <property type="entry name" value="HMG_box_dom_sf"/>
</dbReference>
<dbReference type="InterPro" id="IPR033392">
    <property type="entry name" value="Sox7/17/18_central"/>
</dbReference>
<dbReference type="InterPro" id="IPR021934">
    <property type="entry name" value="Sox_C"/>
</dbReference>
<dbReference type="InterPro" id="IPR050140">
    <property type="entry name" value="SRY-related_HMG-box_TF-like"/>
</dbReference>
<dbReference type="PANTHER" id="PTHR10270">
    <property type="entry name" value="SOX TRANSCRIPTION FACTOR"/>
    <property type="match status" value="1"/>
</dbReference>
<dbReference type="PANTHER" id="PTHR10270:SF204">
    <property type="entry name" value="TRANSCRIPTION FACTOR SOX-18"/>
    <property type="match status" value="1"/>
</dbReference>
<dbReference type="Pfam" id="PF00505">
    <property type="entry name" value="HMG_box"/>
    <property type="match status" value="1"/>
</dbReference>
<dbReference type="Pfam" id="PF12067">
    <property type="entry name" value="Sox17_18_mid"/>
    <property type="match status" value="1"/>
</dbReference>
<dbReference type="SMART" id="SM00398">
    <property type="entry name" value="HMG"/>
    <property type="match status" value="1"/>
</dbReference>
<dbReference type="SUPFAM" id="SSF47095">
    <property type="entry name" value="HMG-box"/>
    <property type="match status" value="1"/>
</dbReference>
<dbReference type="PROSITE" id="PS50118">
    <property type="entry name" value="HMG_BOX_2"/>
    <property type="match status" value="1"/>
</dbReference>
<dbReference type="PROSITE" id="PS51516">
    <property type="entry name" value="SOX_C"/>
    <property type="match status" value="1"/>
</dbReference>
<evidence type="ECO:0000250" key="1">
    <source>
        <dbReference type="UniProtKB" id="P35713"/>
    </source>
</evidence>
<evidence type="ECO:0000250" key="2">
    <source>
        <dbReference type="UniProtKB" id="P43680"/>
    </source>
</evidence>
<evidence type="ECO:0000250" key="3">
    <source>
        <dbReference type="UniProtKB" id="Q90ZH7"/>
    </source>
</evidence>
<evidence type="ECO:0000255" key="4">
    <source>
        <dbReference type="PROSITE-ProRule" id="PRU00267"/>
    </source>
</evidence>
<evidence type="ECO:0000255" key="5">
    <source>
        <dbReference type="PROSITE-ProRule" id="PRU00849"/>
    </source>
</evidence>
<evidence type="ECO:0000256" key="6">
    <source>
        <dbReference type="SAM" id="MobiDB-lite"/>
    </source>
</evidence>
<evidence type="ECO:0000312" key="7">
    <source>
        <dbReference type="EMBL" id="AAI67402.1"/>
    </source>
</evidence>
<keyword id="KW-0217">Developmental protein</keyword>
<keyword id="KW-0238">DNA-binding</keyword>
<keyword id="KW-0539">Nucleus</keyword>
<keyword id="KW-1185">Reference proteome</keyword>
<keyword id="KW-0804">Transcription</keyword>
<keyword id="KW-0805">Transcription regulation</keyword>
<gene>
    <name evidence="7" type="primary">sox18</name>
</gene>
<proteinExistence type="evidence at transcript level"/>
<reference evidence="7" key="1">
    <citation type="submission" date="2008-06" db="EMBL/GenBank/DDBJ databases">
        <authorList>
            <consortium name="NIH - Xenopus Gene Collection (XGC) project"/>
        </authorList>
    </citation>
    <scope>NUCLEOTIDE SEQUENCE [LARGE SCALE MRNA]</scope>
    <source>
        <strain evidence="7">N6</strain>
        <tissue evidence="7">Fat body</tissue>
    </source>
</reference>
<organism>
    <name type="scientific">Xenopus tropicalis</name>
    <name type="common">Western clawed frog</name>
    <name type="synonym">Silurana tropicalis</name>
    <dbReference type="NCBI Taxonomy" id="8364"/>
    <lineage>
        <taxon>Eukaryota</taxon>
        <taxon>Metazoa</taxon>
        <taxon>Chordata</taxon>
        <taxon>Craniata</taxon>
        <taxon>Vertebrata</taxon>
        <taxon>Euteleostomi</taxon>
        <taxon>Amphibia</taxon>
        <taxon>Batrachia</taxon>
        <taxon>Anura</taxon>
        <taxon>Pipoidea</taxon>
        <taxon>Pipidae</taxon>
        <taxon>Xenopodinae</taxon>
        <taxon>Xenopus</taxon>
        <taxon>Silurana</taxon>
    </lineage>
</organism>
<name>SOX18_XENTR</name>
<feature type="chain" id="PRO_0000375980" description="Transcription factor Sox-18">
    <location>
        <begin position="1"/>
        <end position="362"/>
    </location>
</feature>
<feature type="domain" description="Sox C-terminal" evidence="5">
    <location>
        <begin position="235"/>
        <end position="361"/>
    </location>
</feature>
<feature type="DNA-binding region" description="HMG box" evidence="4">
    <location>
        <begin position="68"/>
        <end position="136"/>
    </location>
</feature>
<feature type="region of interest" description="Disordered" evidence="6">
    <location>
        <begin position="1"/>
        <end position="68"/>
    </location>
</feature>
<feature type="region of interest" description="Interaction with DNA" evidence="2">
    <location>
        <begin position="70"/>
        <end position="83"/>
    </location>
</feature>
<feature type="region of interest" description="Interaction with DNA" evidence="2">
    <location>
        <begin position="94"/>
        <end position="106"/>
    </location>
</feature>
<feature type="region of interest" description="Disordered" evidence="6">
    <location>
        <begin position="129"/>
        <end position="159"/>
    </location>
</feature>
<feature type="region of interest" description="Important for transcriptional activation" evidence="2">
    <location>
        <begin position="149"/>
        <end position="209"/>
    </location>
</feature>
<feature type="short sequence motif" description="9aaTAD" evidence="1">
    <location>
        <begin position="307"/>
        <end position="315"/>
    </location>
</feature>
<feature type="compositionally biased region" description="Basic and acidic residues" evidence="6">
    <location>
        <begin position="1"/>
        <end position="13"/>
    </location>
</feature>
<feature type="compositionally biased region" description="Pro residues" evidence="6">
    <location>
        <begin position="37"/>
        <end position="51"/>
    </location>
</feature>
<feature type="compositionally biased region" description="Basic and acidic residues" evidence="6">
    <location>
        <begin position="59"/>
        <end position="68"/>
    </location>
</feature>
<feature type="compositionally biased region" description="Basic residues" evidence="6">
    <location>
        <begin position="135"/>
        <end position="149"/>
    </location>
</feature>
<protein>
    <recommendedName>
        <fullName evidence="2">Transcription factor Sox-18</fullName>
    </recommendedName>
    <alternativeName>
        <fullName>SRY (sex determining region Y)-box 18</fullName>
    </alternativeName>
</protein>
<sequence>MHRPEPSYCREEPTPCQGVNSTWVPPADTVPETSPTPSSPPAPDSPTPSPQPGYGYSPCEEKPGDPRIRRPMNAFMVWAKDERKRLAQQNPDLHNAVLSKMLGQSWKNLSSAEKRPFVEEAERLRVQHLQDHPNYKYRPRRKKQAKKLKRVDPSPLLRNEGYRGQAMANLSHFRDLHPLGGSGDLESYGLPTPEMSPLDVVEPSEPAFFPPHMREEADPGPFRTYQHGVDFGQEKTLREISLPYSSSPSHMGGFLRTPTASAFYYNPHGGSPACTPLGQLSPPPEAPALEAMDHLGPAELWGDFDRNEFDQYLNMSRTQGPGYPFPMSKLGAPRTIPCEESSLISALSDASTAMYYTPCITG</sequence>
<accession>B3DLD3</accession>
<comment type="function">
    <text evidence="3">Transcription factor. Binds to the consensus DNA sequence 5'-AACAAT-3'. Also binds 5'-CACAAT-3' and 5'-AATAAT-3' but with a lower affinity. Acts partially redundantly with sox7 during cardiogenesis, acting indirectly through nodal-signaling to induce mesodermal, organizer and endodermal tissues, which then interact to initiate cardiogenesis. Also acts as an antagonist of beta-catenin signaling (By similarity).</text>
</comment>
<comment type="subcellular location">
    <subcellularLocation>
        <location evidence="4">Nucleus</location>
    </subcellularLocation>
</comment>
<comment type="domain">
    <text evidence="2">Binds target DNA via the HMG box domain.</text>
</comment>
<comment type="domain">
    <text evidence="1">The 9aaTAD motif is a transactivation domain present in a large number of yeast and animal transcription factors.</text>
</comment>